<sequence>MSLLAIGINHNTASVELREKVAFGPEKLSLALNQLSTSSHVKGGVILSTCNRTEIYCDVRSASKNKVIEWLSQFHQVSLDELKPSLYVHEEQAAIRHLMRVACGLDSLVLGEPQILGQVKQAYAEARENHAVNPATEKLFQKAFSVAKRVRTETEIGGSAVSVAYAACTLAKHIFESLADATVLLVGAGETIELVAKHLAGHHCKRMIVANRTRERALSLAQQFGADVIALNEIPDYLAQADIVISSTASPLPIIGKGMVESALKARRHQPMLLVDIAVPRDIEPQVGKLNDAYLYSVDDLQSIVDSNIEQRKVEAIQAEAIVSEESATFMSWMRSLQAVDSIRDYRKQANEAREELLNKSLQALAAGGDPEKLLIELSNKLTNKLIHTPTRALQTAAEQGEPAKLAVIRQSLGLDDLN</sequence>
<evidence type="ECO:0000255" key="1">
    <source>
        <dbReference type="HAMAP-Rule" id="MF_00087"/>
    </source>
</evidence>
<keyword id="KW-0521">NADP</keyword>
<keyword id="KW-0560">Oxidoreductase</keyword>
<keyword id="KW-0627">Porphyrin biosynthesis</keyword>
<accession>A5F697</accession>
<accession>C3M3D7</accession>
<comment type="function">
    <text evidence="1">Catalyzes the NADPH-dependent reduction of glutamyl-tRNA(Glu) to glutamate 1-semialdehyde (GSA).</text>
</comment>
<comment type="catalytic activity">
    <reaction evidence="1">
        <text>(S)-4-amino-5-oxopentanoate + tRNA(Glu) + NADP(+) = L-glutamyl-tRNA(Glu) + NADPH + H(+)</text>
        <dbReference type="Rhea" id="RHEA:12344"/>
        <dbReference type="Rhea" id="RHEA-COMP:9663"/>
        <dbReference type="Rhea" id="RHEA-COMP:9680"/>
        <dbReference type="ChEBI" id="CHEBI:15378"/>
        <dbReference type="ChEBI" id="CHEBI:57501"/>
        <dbReference type="ChEBI" id="CHEBI:57783"/>
        <dbReference type="ChEBI" id="CHEBI:58349"/>
        <dbReference type="ChEBI" id="CHEBI:78442"/>
        <dbReference type="ChEBI" id="CHEBI:78520"/>
        <dbReference type="EC" id="1.2.1.70"/>
    </reaction>
</comment>
<comment type="pathway">
    <text evidence="1">Porphyrin-containing compound metabolism; protoporphyrin-IX biosynthesis; 5-aminolevulinate from L-glutamyl-tRNA(Glu): step 1/2.</text>
</comment>
<comment type="subunit">
    <text evidence="1">Homodimer.</text>
</comment>
<comment type="domain">
    <text evidence="1">Possesses an unusual extended V-shaped dimeric structure with each monomer consisting of three distinct domains arranged along a curved 'spinal' alpha-helix. The N-terminal catalytic domain specifically recognizes the glutamate moiety of the substrate. The second domain is the NADPH-binding domain, and the third C-terminal domain is responsible for dimerization.</text>
</comment>
<comment type="miscellaneous">
    <text evidence="1">During catalysis, the active site Cys acts as a nucleophile attacking the alpha-carbonyl group of tRNA-bound glutamate with the formation of a thioester intermediate between enzyme and glutamate, and the concomitant release of tRNA(Glu). The thioester intermediate is finally reduced by direct hydride transfer from NADPH, to form the product GSA.</text>
</comment>
<comment type="similarity">
    <text evidence="1">Belongs to the glutamyl-tRNA reductase family.</text>
</comment>
<protein>
    <recommendedName>
        <fullName evidence="1">Glutamyl-tRNA reductase</fullName>
        <shortName evidence="1">GluTR</shortName>
        <ecNumber evidence="1">1.2.1.70</ecNumber>
    </recommendedName>
</protein>
<organism>
    <name type="scientific">Vibrio cholerae serotype O1 (strain ATCC 39541 / Classical Ogawa 395 / O395)</name>
    <dbReference type="NCBI Taxonomy" id="345073"/>
    <lineage>
        <taxon>Bacteria</taxon>
        <taxon>Pseudomonadati</taxon>
        <taxon>Pseudomonadota</taxon>
        <taxon>Gammaproteobacteria</taxon>
        <taxon>Vibrionales</taxon>
        <taxon>Vibrionaceae</taxon>
        <taxon>Vibrio</taxon>
    </lineage>
</organism>
<dbReference type="EC" id="1.2.1.70" evidence="1"/>
<dbReference type="EMBL" id="CP000627">
    <property type="protein sequence ID" value="ABQ21199.1"/>
    <property type="molecule type" value="Genomic_DNA"/>
</dbReference>
<dbReference type="EMBL" id="CP001235">
    <property type="protein sequence ID" value="ACP10286.1"/>
    <property type="molecule type" value="Genomic_DNA"/>
</dbReference>
<dbReference type="RefSeq" id="WP_000054219.1">
    <property type="nucleotide sequence ID" value="NZ_JAACZH010000001.1"/>
</dbReference>
<dbReference type="SMR" id="A5F697"/>
<dbReference type="GeneID" id="89513844"/>
<dbReference type="KEGG" id="vco:VC0395_A1757"/>
<dbReference type="KEGG" id="vcr:VC395_2294"/>
<dbReference type="PATRIC" id="fig|345073.21.peg.2211"/>
<dbReference type="eggNOG" id="COG0373">
    <property type="taxonomic scope" value="Bacteria"/>
</dbReference>
<dbReference type="HOGENOM" id="CLU_035113_2_2_6"/>
<dbReference type="OrthoDB" id="110209at2"/>
<dbReference type="UniPathway" id="UPA00251">
    <property type="reaction ID" value="UER00316"/>
</dbReference>
<dbReference type="Proteomes" id="UP000000249">
    <property type="component" value="Chromosome 2"/>
</dbReference>
<dbReference type="GO" id="GO:0008883">
    <property type="term" value="F:glutamyl-tRNA reductase activity"/>
    <property type="evidence" value="ECO:0007669"/>
    <property type="project" value="UniProtKB-UniRule"/>
</dbReference>
<dbReference type="GO" id="GO:0050661">
    <property type="term" value="F:NADP binding"/>
    <property type="evidence" value="ECO:0007669"/>
    <property type="project" value="InterPro"/>
</dbReference>
<dbReference type="GO" id="GO:0019353">
    <property type="term" value="P:protoporphyrinogen IX biosynthetic process from glutamate"/>
    <property type="evidence" value="ECO:0007669"/>
    <property type="project" value="TreeGrafter"/>
</dbReference>
<dbReference type="CDD" id="cd05213">
    <property type="entry name" value="NAD_bind_Glutamyl_tRNA_reduct"/>
    <property type="match status" value="1"/>
</dbReference>
<dbReference type="FunFam" id="3.30.460.30:FF:000001">
    <property type="entry name" value="Glutamyl-tRNA reductase"/>
    <property type="match status" value="1"/>
</dbReference>
<dbReference type="FunFam" id="3.40.50.720:FF:000031">
    <property type="entry name" value="Glutamyl-tRNA reductase"/>
    <property type="match status" value="1"/>
</dbReference>
<dbReference type="Gene3D" id="3.30.460.30">
    <property type="entry name" value="Glutamyl-tRNA reductase, N-terminal domain"/>
    <property type="match status" value="1"/>
</dbReference>
<dbReference type="Gene3D" id="3.40.50.720">
    <property type="entry name" value="NAD(P)-binding Rossmann-like Domain"/>
    <property type="match status" value="1"/>
</dbReference>
<dbReference type="HAMAP" id="MF_00087">
    <property type="entry name" value="Glu_tRNA_reductase"/>
    <property type="match status" value="1"/>
</dbReference>
<dbReference type="InterPro" id="IPR000343">
    <property type="entry name" value="4pyrrol_synth_GluRdtase"/>
</dbReference>
<dbReference type="InterPro" id="IPR015896">
    <property type="entry name" value="4pyrrol_synth_GluRdtase_dimer"/>
</dbReference>
<dbReference type="InterPro" id="IPR015895">
    <property type="entry name" value="4pyrrol_synth_GluRdtase_N"/>
</dbReference>
<dbReference type="InterPro" id="IPR018214">
    <property type="entry name" value="GluRdtase_CS"/>
</dbReference>
<dbReference type="InterPro" id="IPR036453">
    <property type="entry name" value="GluRdtase_dimer_dom_sf"/>
</dbReference>
<dbReference type="InterPro" id="IPR036343">
    <property type="entry name" value="GluRdtase_N_sf"/>
</dbReference>
<dbReference type="InterPro" id="IPR036291">
    <property type="entry name" value="NAD(P)-bd_dom_sf"/>
</dbReference>
<dbReference type="InterPro" id="IPR006151">
    <property type="entry name" value="Shikm_DH/Glu-tRNA_Rdtase"/>
</dbReference>
<dbReference type="NCBIfam" id="TIGR01035">
    <property type="entry name" value="hemA"/>
    <property type="match status" value="1"/>
</dbReference>
<dbReference type="PANTHER" id="PTHR43013">
    <property type="entry name" value="GLUTAMYL-TRNA REDUCTASE"/>
    <property type="match status" value="1"/>
</dbReference>
<dbReference type="PANTHER" id="PTHR43013:SF1">
    <property type="entry name" value="GLUTAMYL-TRNA REDUCTASE"/>
    <property type="match status" value="1"/>
</dbReference>
<dbReference type="Pfam" id="PF00745">
    <property type="entry name" value="GlutR_dimer"/>
    <property type="match status" value="1"/>
</dbReference>
<dbReference type="Pfam" id="PF05201">
    <property type="entry name" value="GlutR_N"/>
    <property type="match status" value="1"/>
</dbReference>
<dbReference type="Pfam" id="PF01488">
    <property type="entry name" value="Shikimate_DH"/>
    <property type="match status" value="1"/>
</dbReference>
<dbReference type="PIRSF" id="PIRSF000445">
    <property type="entry name" value="4pyrrol_synth_GluRdtase"/>
    <property type="match status" value="1"/>
</dbReference>
<dbReference type="SUPFAM" id="SSF69742">
    <property type="entry name" value="Glutamyl tRNA-reductase catalytic, N-terminal domain"/>
    <property type="match status" value="1"/>
</dbReference>
<dbReference type="SUPFAM" id="SSF69075">
    <property type="entry name" value="Glutamyl tRNA-reductase dimerization domain"/>
    <property type="match status" value="1"/>
</dbReference>
<dbReference type="SUPFAM" id="SSF51735">
    <property type="entry name" value="NAD(P)-binding Rossmann-fold domains"/>
    <property type="match status" value="1"/>
</dbReference>
<dbReference type="PROSITE" id="PS00747">
    <property type="entry name" value="GLUTR"/>
    <property type="match status" value="1"/>
</dbReference>
<proteinExistence type="inferred from homology"/>
<reference key="1">
    <citation type="submission" date="2007-03" db="EMBL/GenBank/DDBJ databases">
        <authorList>
            <person name="Heidelberg J."/>
        </authorList>
    </citation>
    <scope>NUCLEOTIDE SEQUENCE [LARGE SCALE GENOMIC DNA]</scope>
    <source>
        <strain>ATCC 39541 / Classical Ogawa 395 / O395</strain>
    </source>
</reference>
<reference key="2">
    <citation type="journal article" date="2008" name="PLoS ONE">
        <title>A recalibrated molecular clock and independent origins for the cholera pandemic clones.</title>
        <authorList>
            <person name="Feng L."/>
            <person name="Reeves P.R."/>
            <person name="Lan R."/>
            <person name="Ren Y."/>
            <person name="Gao C."/>
            <person name="Zhou Z."/>
            <person name="Ren Y."/>
            <person name="Cheng J."/>
            <person name="Wang W."/>
            <person name="Wang J."/>
            <person name="Qian W."/>
            <person name="Li D."/>
            <person name="Wang L."/>
        </authorList>
    </citation>
    <scope>NUCLEOTIDE SEQUENCE [LARGE SCALE GENOMIC DNA]</scope>
    <source>
        <strain>ATCC 39541 / Classical Ogawa 395 / O395</strain>
    </source>
</reference>
<gene>
    <name evidence="1" type="primary">hemA</name>
    <name type="ordered locus">VC0395_A1757</name>
    <name type="ordered locus">VC395_2294</name>
</gene>
<name>HEM1_VIBC3</name>
<feature type="chain" id="PRO_1000071251" description="Glutamyl-tRNA reductase">
    <location>
        <begin position="1"/>
        <end position="419"/>
    </location>
</feature>
<feature type="active site" description="Nucleophile" evidence="1">
    <location>
        <position position="50"/>
    </location>
</feature>
<feature type="binding site" evidence="1">
    <location>
        <begin position="49"/>
        <end position="52"/>
    </location>
    <ligand>
        <name>substrate</name>
    </ligand>
</feature>
<feature type="binding site" evidence="1">
    <location>
        <position position="107"/>
    </location>
    <ligand>
        <name>substrate</name>
    </ligand>
</feature>
<feature type="binding site" evidence="1">
    <location>
        <begin position="112"/>
        <end position="114"/>
    </location>
    <ligand>
        <name>substrate</name>
    </ligand>
</feature>
<feature type="binding site" evidence="1">
    <location>
        <position position="118"/>
    </location>
    <ligand>
        <name>substrate</name>
    </ligand>
</feature>
<feature type="binding site" evidence="1">
    <location>
        <begin position="187"/>
        <end position="192"/>
    </location>
    <ligand>
        <name>NADP(+)</name>
        <dbReference type="ChEBI" id="CHEBI:58349"/>
    </ligand>
</feature>
<feature type="site" description="Important for activity" evidence="1">
    <location>
        <position position="97"/>
    </location>
</feature>